<reference evidence="5" key="1">
    <citation type="journal article" date="1998" name="Science">
        <title>Genome sequence of the nematode C. elegans: a platform for investigating biology.</title>
        <authorList>
            <consortium name="The C. elegans sequencing consortium"/>
        </authorList>
    </citation>
    <scope>NUCLEOTIDE SEQUENCE [LARGE SCALE GENOMIC DNA]</scope>
    <source>
        <strain evidence="5">Bristol N2</strain>
    </source>
</reference>
<reference evidence="4" key="2">
    <citation type="journal article" date="2016" name="Dev. Cell">
        <title>Functional coordination of WAVE and WASP in C. elegans neuroblast migration.</title>
        <authorList>
            <person name="Zhu Z."/>
            <person name="Chai Y."/>
            <person name="Jiang Y."/>
            <person name="Li W."/>
            <person name="Hu H."/>
            <person name="Li W."/>
            <person name="Wu J.W."/>
            <person name="Wang Z.X."/>
            <person name="Huang S."/>
            <person name="Ou G."/>
        </authorList>
    </citation>
    <scope>FUNCTION</scope>
    <scope>INTERACTION WITH ABL-1</scope>
    <scope>TISSUE SPECIFICITY</scope>
    <scope>MUTAGENESIS OF HIS-140</scope>
</reference>
<gene>
    <name evidence="3" type="primary">soem-1</name>
    <name evidence="6" type="ORF">Y87G2A.17</name>
</gene>
<comment type="function">
    <text evidence="2">Functions downstream of migratory protein mig-13 and may play a role in the control of Q neuroblast migration during larval development.</text>
</comment>
<comment type="subunit">
    <text evidence="2">Interacts with abl-1.</text>
</comment>
<comment type="tissue specificity">
    <text evidence="2">Expressed in PQR, but not AQR, Q neuroblast descendents.</text>
</comment>
<dbReference type="EMBL" id="BX284601">
    <property type="protein sequence ID" value="CAE18040.1"/>
    <property type="molecule type" value="Genomic_DNA"/>
</dbReference>
<dbReference type="RefSeq" id="NP_001021833.1">
    <property type="nucleotide sequence ID" value="NM_001026662.6"/>
</dbReference>
<dbReference type="SMR" id="Q7YWN4"/>
<dbReference type="PaxDb" id="6239-Y87G2A.17"/>
<dbReference type="EnsemblMetazoa" id="Y87G2A.17.1">
    <property type="protein sequence ID" value="Y87G2A.17.1"/>
    <property type="gene ID" value="WBGene00013603"/>
</dbReference>
<dbReference type="EnsemblMetazoa" id="Y87G2A.17.2">
    <property type="protein sequence ID" value="Y87G2A.17.2"/>
    <property type="gene ID" value="WBGene00013603"/>
</dbReference>
<dbReference type="GeneID" id="3565861"/>
<dbReference type="KEGG" id="cel:CELE_Y87G2A.17"/>
<dbReference type="UCSC" id="Y87G2A.17">
    <property type="organism name" value="c. elegans"/>
</dbReference>
<dbReference type="AGR" id="WB:WBGene00013603"/>
<dbReference type="CTD" id="3565861"/>
<dbReference type="WormBase" id="Y87G2A.17">
    <property type="protein sequence ID" value="CE35142"/>
    <property type="gene ID" value="WBGene00013603"/>
    <property type="gene designation" value="soem-1"/>
</dbReference>
<dbReference type="eggNOG" id="ENOG502SA57">
    <property type="taxonomic scope" value="Eukaryota"/>
</dbReference>
<dbReference type="HOGENOM" id="CLU_1235988_0_0_1"/>
<dbReference type="InParanoid" id="Q7YWN4"/>
<dbReference type="OMA" id="MEEAHYD"/>
<dbReference type="OrthoDB" id="5914531at2759"/>
<dbReference type="PhylomeDB" id="Q7YWN4"/>
<dbReference type="PRO" id="PR:Q7YWN4"/>
<dbReference type="Proteomes" id="UP000001940">
    <property type="component" value="Chromosome I"/>
</dbReference>
<dbReference type="Bgee" id="WBGene00013603">
    <property type="expression patterns" value="Expressed in pharyngeal muscle cell (C elegans) and 3 other cell types or tissues"/>
</dbReference>
<dbReference type="Gene3D" id="3.30.505.10">
    <property type="entry name" value="SH2 domain"/>
    <property type="match status" value="1"/>
</dbReference>
<dbReference type="InterPro" id="IPR000980">
    <property type="entry name" value="SH2"/>
</dbReference>
<dbReference type="InterPro" id="IPR036860">
    <property type="entry name" value="SH2_dom_sf"/>
</dbReference>
<dbReference type="InterPro" id="IPR051846">
    <property type="entry name" value="SH2_domain_adapters"/>
</dbReference>
<dbReference type="PANTHER" id="PTHR15127">
    <property type="entry name" value="HEAVYWEIGHT, ISOFORM A"/>
    <property type="match status" value="1"/>
</dbReference>
<dbReference type="PANTHER" id="PTHR15127:SF32">
    <property type="entry name" value="HEAVYWEIGHT, ISOFORM A"/>
    <property type="match status" value="1"/>
</dbReference>
<dbReference type="Pfam" id="PF00017">
    <property type="entry name" value="SH2"/>
    <property type="match status" value="1"/>
</dbReference>
<dbReference type="SMART" id="SM00252">
    <property type="entry name" value="SH2"/>
    <property type="match status" value="1"/>
</dbReference>
<dbReference type="SUPFAM" id="SSF55550">
    <property type="entry name" value="SH2 domain"/>
    <property type="match status" value="1"/>
</dbReference>
<dbReference type="PROSITE" id="PS50001">
    <property type="entry name" value="SH2"/>
    <property type="match status" value="1"/>
</dbReference>
<organism evidence="5">
    <name type="scientific">Caenorhabditis elegans</name>
    <dbReference type="NCBI Taxonomy" id="6239"/>
    <lineage>
        <taxon>Eukaryota</taxon>
        <taxon>Metazoa</taxon>
        <taxon>Ecdysozoa</taxon>
        <taxon>Nematoda</taxon>
        <taxon>Chromadorea</taxon>
        <taxon>Rhabditida</taxon>
        <taxon>Rhabditina</taxon>
        <taxon>Rhabditomorpha</taxon>
        <taxon>Rhabditoidea</taxon>
        <taxon>Rhabditidae</taxon>
        <taxon>Peloderinae</taxon>
        <taxon>Caenorhabditis</taxon>
    </lineage>
</organism>
<keyword id="KW-1185">Reference proteome</keyword>
<keyword id="KW-0727">SH2 domain</keyword>
<proteinExistence type="evidence at protein level"/>
<protein>
    <recommendedName>
        <fullName evidence="4">Protein soem-1</fullName>
    </recommendedName>
    <alternativeName>
        <fullName evidence="3">Suppressor of ectopic mig-13</fullName>
    </alternativeName>
</protein>
<name>SOEM_CAEEL</name>
<evidence type="ECO:0000255" key="1">
    <source>
        <dbReference type="PROSITE-ProRule" id="PRU00191"/>
    </source>
</evidence>
<evidence type="ECO:0000269" key="2">
    <source>
    </source>
</evidence>
<evidence type="ECO:0000303" key="3">
    <source>
    </source>
</evidence>
<evidence type="ECO:0000305" key="4"/>
<evidence type="ECO:0000312" key="5">
    <source>
        <dbReference type="Proteomes" id="UP000001940"/>
    </source>
</evidence>
<evidence type="ECO:0000312" key="6">
    <source>
        <dbReference type="WormBase" id="Y87G2A.17"/>
    </source>
</evidence>
<sequence length="190" mass="21216">MMMTMAADYGSSEGHYDTPWEFLARPNSVRFSTADVRLSTSAAGDAKVSPHGSPSLCSSSSFVNQLVQIGNSAVDARRKVPRDESKRRRPSDSEIYMEQNMNRVEAEKRLENRNLGDYLLRSRGEGSAALSLRATKGVVHIKIEWNGEKWVIGEGPLFRSISSAISFYRRHPLPIRGADHLVLKNQLKPV</sequence>
<accession>Q7YWN4</accession>
<feature type="chain" id="PRO_0000440172" description="Protein soem-1" evidence="4">
    <location>
        <begin position="1"/>
        <end position="190"/>
    </location>
</feature>
<feature type="domain" description="SH2" evidence="1">
    <location>
        <begin position="96"/>
        <end position="190"/>
    </location>
</feature>
<feature type="mutagenesis site" description="In cas452; suppresses the anterior migration of mutant mig-13 expressing PQR cells, which are descendents of Q neuroblasts. Abolishes interaction with abl-1 in yeast two-hybrid assay." evidence="2">
    <original>H</original>
    <variation>Q</variation>
    <location>
        <position position="140"/>
    </location>
</feature>